<sequence length="248" mass="26641">MSSAIYPSLKGKRVVITGGGSGIGAGLTAGFARQGAEVIFLDIADEDSRALEAELAGSPIPPVYKRCDLMNLEAIKAVFAEIGDVDVLVNNAGNDDRHKLADVTGAYWDERINVNLRHMLFCTQAVAPGMKKRGGGAVINFGSISWHLGLEDLVLYETAKAGIEGMTRALARELGPDDIRVTCVVPGNVKTKRQEKWYTPEGEAQIVAAQCLKGRIVPENVAALVLFLASDDASLCTGHEYWIDAGWR</sequence>
<comment type="function">
    <text evidence="2">Involved in the degradation of D-xylose, a major component of hemicelluloses such as xylan. Catalyzes the initial reaction in the xylose utilization pathway by oxydizing D-xylose into D-xylonolactone. Shows some activity toward L-arabinose, but little to none toward D-arabinose, L-xylose, D-ribose, D-galactose, D-glucose or D-glucose-6-phosphate.</text>
</comment>
<comment type="catalytic activity">
    <reaction evidence="2">
        <text>D-xylose + NAD(+) = D-xylono-1,5-lactone + NADH + H(+)</text>
        <dbReference type="Rhea" id="RHEA:13861"/>
        <dbReference type="ChEBI" id="CHEBI:15378"/>
        <dbReference type="ChEBI" id="CHEBI:15867"/>
        <dbReference type="ChEBI" id="CHEBI:53455"/>
        <dbReference type="ChEBI" id="CHEBI:57540"/>
        <dbReference type="ChEBI" id="CHEBI:57945"/>
        <dbReference type="EC" id="1.1.1.175"/>
    </reaction>
</comment>
<comment type="biophysicochemical properties">
    <kinetics>
        <KM evidence="2">0.76 mM for D-xylose</KM>
        <KM evidence="2">166 mM for L-arabinose</KM>
        <Vmax evidence="2">27.5 umol/min/mg enzyme with D-xylose as substrate</Vmax>
        <Vmax evidence="2">20.05 umol/min/mg enzyme with L-arabinose as substrate</Vmax>
    </kinetics>
</comment>
<comment type="disruption phenotype">
    <text evidence="2">Impairs growth on D-xylose as sole energy and carbon substrate.</text>
</comment>
<comment type="similarity">
    <text evidence="3">Belongs to the short-chain dehydrogenases/reductases (SDR) family.</text>
</comment>
<name>XDH_CAUVN</name>
<dbReference type="EC" id="1.1.1.175" evidence="2"/>
<dbReference type="EMBL" id="CP001340">
    <property type="protein sequence ID" value="ACL94329.1"/>
    <property type="molecule type" value="Genomic_DNA"/>
</dbReference>
<dbReference type="RefSeq" id="WP_010918706.1">
    <property type="nucleotide sequence ID" value="NC_011916.1"/>
</dbReference>
<dbReference type="RefSeq" id="YP_002516237.1">
    <property type="nucleotide sequence ID" value="NC_011916.1"/>
</dbReference>
<dbReference type="SMR" id="B8H1Z0"/>
<dbReference type="GeneID" id="7329904"/>
<dbReference type="KEGG" id="ccs:CCNA_00864"/>
<dbReference type="PATRIC" id="fig|565050.3.peg.851"/>
<dbReference type="HOGENOM" id="CLU_010194_1_0_5"/>
<dbReference type="OrthoDB" id="9789398at2"/>
<dbReference type="PhylomeDB" id="B8H1Z0"/>
<dbReference type="BRENDA" id="1.1.1.175">
    <property type="organism ID" value="1218"/>
</dbReference>
<dbReference type="SABIO-RK" id="B8H1Z0"/>
<dbReference type="Proteomes" id="UP000001364">
    <property type="component" value="Chromosome"/>
</dbReference>
<dbReference type="GO" id="GO:0047838">
    <property type="term" value="F:D-xylose 1-dehydrogenase (NAD+) activity"/>
    <property type="evidence" value="ECO:0007669"/>
    <property type="project" value="UniProtKB-EC"/>
</dbReference>
<dbReference type="CDD" id="cd05233">
    <property type="entry name" value="SDR_c"/>
    <property type="match status" value="1"/>
</dbReference>
<dbReference type="FunFam" id="3.40.50.720:FF:000084">
    <property type="entry name" value="Short-chain dehydrogenase reductase"/>
    <property type="match status" value="1"/>
</dbReference>
<dbReference type="Gene3D" id="3.40.50.720">
    <property type="entry name" value="NAD(P)-binding Rossmann-like Domain"/>
    <property type="match status" value="1"/>
</dbReference>
<dbReference type="InterPro" id="IPR036291">
    <property type="entry name" value="NAD(P)-bd_dom_sf"/>
</dbReference>
<dbReference type="InterPro" id="IPR002347">
    <property type="entry name" value="SDR_fam"/>
</dbReference>
<dbReference type="PANTHER" id="PTHR43639">
    <property type="entry name" value="OXIDOREDUCTASE, SHORT-CHAIN DEHYDROGENASE/REDUCTASE FAMILY (AFU_ORTHOLOGUE AFUA_5G02870)"/>
    <property type="match status" value="1"/>
</dbReference>
<dbReference type="PANTHER" id="PTHR43639:SF1">
    <property type="entry name" value="SHORT-CHAIN DEHYDROGENASE_REDUCTASE FAMILY PROTEIN"/>
    <property type="match status" value="1"/>
</dbReference>
<dbReference type="Pfam" id="PF13561">
    <property type="entry name" value="adh_short_C2"/>
    <property type="match status" value="1"/>
</dbReference>
<dbReference type="PRINTS" id="PR00081">
    <property type="entry name" value="GDHRDH"/>
</dbReference>
<dbReference type="PRINTS" id="PR00080">
    <property type="entry name" value="SDRFAMILY"/>
</dbReference>
<dbReference type="SUPFAM" id="SSF51735">
    <property type="entry name" value="NAD(P)-binding Rossmann-fold domains"/>
    <property type="match status" value="1"/>
</dbReference>
<protein>
    <recommendedName>
        <fullName>D-xylose 1-dehydrogenase</fullName>
        <shortName>XDH</shortName>
        <ecNumber evidence="2">1.1.1.175</ecNumber>
    </recommendedName>
</protein>
<evidence type="ECO:0000250" key="1">
    <source>
        <dbReference type="UniProtKB" id="P9WGT1"/>
    </source>
</evidence>
<evidence type="ECO:0000269" key="2">
    <source>
    </source>
</evidence>
<evidence type="ECO:0000305" key="3"/>
<keyword id="KW-0520">NAD</keyword>
<keyword id="KW-0560">Oxidoreductase</keyword>
<keyword id="KW-1185">Reference proteome</keyword>
<organism>
    <name type="scientific">Caulobacter vibrioides (strain NA1000 / CB15N)</name>
    <name type="common">Caulobacter crescentus</name>
    <dbReference type="NCBI Taxonomy" id="565050"/>
    <lineage>
        <taxon>Bacteria</taxon>
        <taxon>Pseudomonadati</taxon>
        <taxon>Pseudomonadota</taxon>
        <taxon>Alphaproteobacteria</taxon>
        <taxon>Caulobacterales</taxon>
        <taxon>Caulobacteraceae</taxon>
        <taxon>Caulobacter</taxon>
    </lineage>
</organism>
<reference key="1">
    <citation type="journal article" date="2010" name="J. Bacteriol.">
        <title>The genetic basis of laboratory adaptation in Caulobacter crescentus.</title>
        <authorList>
            <person name="Marks M.E."/>
            <person name="Castro-Rojas C.M."/>
            <person name="Teiling C."/>
            <person name="Du L."/>
            <person name="Kapatral V."/>
            <person name="Walunas T.L."/>
            <person name="Crosson S."/>
        </authorList>
    </citation>
    <scope>NUCLEOTIDE SEQUENCE [LARGE SCALE GENOMIC DNA]</scope>
    <source>
        <strain>NA1000 / CB15N</strain>
    </source>
</reference>
<reference key="2">
    <citation type="journal article" date="2007" name="J. Bacteriol.">
        <title>Genetic analysis of a novel pathway for D-xylose metabolism in Caulobacter crescentus.</title>
        <authorList>
            <person name="Stephens C."/>
            <person name="Christen B."/>
            <person name="Fuchs T."/>
            <person name="Sundaram V."/>
            <person name="Watanabe K."/>
            <person name="Jenal U."/>
        </authorList>
    </citation>
    <scope>FUNCTION</scope>
    <scope>DISRUPTION PHENOTYPE</scope>
    <scope>CATALYTIC ACTIVITY</scope>
    <scope>BIOPHYSICOCHEMICAL PROPERTIES</scope>
    <source>
        <strain>NA1000 / CB15N</strain>
    </source>
</reference>
<proteinExistence type="evidence at protein level"/>
<accession>B8H1Z0</accession>
<gene>
    <name type="primary">xylB</name>
    <name type="ordered locus">CCNA_00864</name>
</gene>
<feature type="chain" id="PRO_0000428802" description="D-xylose 1-dehydrogenase">
    <location>
        <begin position="1"/>
        <end position="248"/>
    </location>
</feature>
<feature type="active site" description="Proton acceptor" evidence="1">
    <location>
        <position position="156"/>
    </location>
</feature>
<feature type="binding site" evidence="1">
    <location>
        <position position="42"/>
    </location>
    <ligand>
        <name>NAD(+)</name>
        <dbReference type="ChEBI" id="CHEBI:57540"/>
    </ligand>
</feature>
<feature type="binding site" evidence="1">
    <location>
        <position position="68"/>
    </location>
    <ligand>
        <name>NAD(+)</name>
        <dbReference type="ChEBI" id="CHEBI:57540"/>
    </ligand>
</feature>
<feature type="binding site" evidence="1">
    <location>
        <position position="91"/>
    </location>
    <ligand>
        <name>NAD(+)</name>
        <dbReference type="ChEBI" id="CHEBI:57540"/>
    </ligand>
</feature>
<feature type="binding site" evidence="1">
    <location>
        <position position="156"/>
    </location>
    <ligand>
        <name>NAD(+)</name>
        <dbReference type="ChEBI" id="CHEBI:57540"/>
    </ligand>
</feature>
<feature type="binding site" evidence="1">
    <location>
        <position position="160"/>
    </location>
    <ligand>
        <name>NAD(+)</name>
        <dbReference type="ChEBI" id="CHEBI:57540"/>
    </ligand>
</feature>
<feature type="binding site" evidence="1">
    <location>
        <position position="189"/>
    </location>
    <ligand>
        <name>NAD(+)</name>
        <dbReference type="ChEBI" id="CHEBI:57540"/>
    </ligand>
</feature>
<feature type="binding site" evidence="1">
    <location>
        <position position="191"/>
    </location>
    <ligand>
        <name>NAD(+)</name>
        <dbReference type="ChEBI" id="CHEBI:57540"/>
    </ligand>
</feature>